<gene>
    <name evidence="1" type="primary">serS</name>
    <name type="ordered locus">CYA_0247</name>
</gene>
<feature type="chain" id="PRO_1000019847" description="Serine--tRNA ligase">
    <location>
        <begin position="1"/>
        <end position="435"/>
    </location>
</feature>
<feature type="binding site" evidence="1">
    <location>
        <begin position="234"/>
        <end position="236"/>
    </location>
    <ligand>
        <name>L-serine</name>
        <dbReference type="ChEBI" id="CHEBI:33384"/>
    </ligand>
</feature>
<feature type="binding site" evidence="1">
    <location>
        <begin position="265"/>
        <end position="267"/>
    </location>
    <ligand>
        <name>ATP</name>
        <dbReference type="ChEBI" id="CHEBI:30616"/>
    </ligand>
</feature>
<feature type="binding site" evidence="1">
    <location>
        <position position="288"/>
    </location>
    <ligand>
        <name>L-serine</name>
        <dbReference type="ChEBI" id="CHEBI:33384"/>
    </ligand>
</feature>
<feature type="binding site" evidence="1">
    <location>
        <begin position="352"/>
        <end position="355"/>
    </location>
    <ligand>
        <name>ATP</name>
        <dbReference type="ChEBI" id="CHEBI:30616"/>
    </ligand>
</feature>
<feature type="binding site" evidence="1">
    <location>
        <position position="388"/>
    </location>
    <ligand>
        <name>L-serine</name>
        <dbReference type="ChEBI" id="CHEBI:33384"/>
    </ligand>
</feature>
<accession>Q2JXL1</accession>
<protein>
    <recommendedName>
        <fullName evidence="1">Serine--tRNA ligase</fullName>
        <ecNumber evidence="1">6.1.1.11</ecNumber>
    </recommendedName>
    <alternativeName>
        <fullName evidence="1">Seryl-tRNA synthetase</fullName>
        <shortName evidence="1">SerRS</shortName>
    </alternativeName>
    <alternativeName>
        <fullName evidence="1">Seryl-tRNA(Ser/Sec) synthetase</fullName>
    </alternativeName>
</protein>
<reference key="1">
    <citation type="journal article" date="2007" name="ISME J.">
        <title>Population level functional diversity in a microbial community revealed by comparative genomic and metagenomic analyses.</title>
        <authorList>
            <person name="Bhaya D."/>
            <person name="Grossman A.R."/>
            <person name="Steunou A.-S."/>
            <person name="Khuri N."/>
            <person name="Cohan F.M."/>
            <person name="Hamamura N."/>
            <person name="Melendrez M.C."/>
            <person name="Bateson M.M."/>
            <person name="Ward D.M."/>
            <person name="Heidelberg J.F."/>
        </authorList>
    </citation>
    <scope>NUCLEOTIDE SEQUENCE [LARGE SCALE GENOMIC DNA]</scope>
    <source>
        <strain>JA-3-3Ab</strain>
    </source>
</reference>
<organism>
    <name type="scientific">Synechococcus sp. (strain JA-3-3Ab)</name>
    <name type="common">Cyanobacteria bacterium Yellowstone A-Prime</name>
    <dbReference type="NCBI Taxonomy" id="321327"/>
    <lineage>
        <taxon>Bacteria</taxon>
        <taxon>Bacillati</taxon>
        <taxon>Cyanobacteriota</taxon>
        <taxon>Cyanophyceae</taxon>
        <taxon>Synechococcales</taxon>
        <taxon>Synechococcaceae</taxon>
        <taxon>Synechococcus</taxon>
    </lineage>
</organism>
<keyword id="KW-0030">Aminoacyl-tRNA synthetase</keyword>
<keyword id="KW-0067">ATP-binding</keyword>
<keyword id="KW-0963">Cytoplasm</keyword>
<keyword id="KW-0436">Ligase</keyword>
<keyword id="KW-0547">Nucleotide-binding</keyword>
<keyword id="KW-0648">Protein biosynthesis</keyword>
<name>SYS_SYNJA</name>
<sequence length="435" mass="48592">MLDLKLLRDRPEEVRQALNKRGAVADLDRILELDGKRRQLETRRVALQAESNSLGKKVGELIRQGADPQGAEVTALRQQGADLKAEIAQLEQRERELEEEMQTLLLTLPNLPLPSVPVGQDETENVEVRRWGDALKPTHPVLPHDEVAEKLGLLEVGRAVKVAQSRFVAMVGAGAALERALIAMMLERHIAAGYTEVIPPFLVNSAALEGTGQLPKFAAESFRCADDDLWLIPTAEVPLTNLYREEVIPAERLPLYFCAYTPCFRREAGSYGRDTKGLIRLHQFQKVELVKVTHPTQSEAEHEKLVQDAEAILQMLELPYRVVELCTGDLGFSAARCFDLEVWFPSQNRYREISSCSNCWDFQARRANLRYKEAGQKGTHFVHTLNGSGLAVGRALAALLENHQQPDGSIRIPQALRPFLSSRFLSEDGALRTAP</sequence>
<evidence type="ECO:0000255" key="1">
    <source>
        <dbReference type="HAMAP-Rule" id="MF_00176"/>
    </source>
</evidence>
<comment type="function">
    <text evidence="1">Catalyzes the attachment of serine to tRNA(Ser). Is also able to aminoacylate tRNA(Sec) with serine, to form the misacylated tRNA L-seryl-tRNA(Sec), which will be further converted into selenocysteinyl-tRNA(Sec).</text>
</comment>
<comment type="catalytic activity">
    <reaction evidence="1">
        <text>tRNA(Ser) + L-serine + ATP = L-seryl-tRNA(Ser) + AMP + diphosphate + H(+)</text>
        <dbReference type="Rhea" id="RHEA:12292"/>
        <dbReference type="Rhea" id="RHEA-COMP:9669"/>
        <dbReference type="Rhea" id="RHEA-COMP:9703"/>
        <dbReference type="ChEBI" id="CHEBI:15378"/>
        <dbReference type="ChEBI" id="CHEBI:30616"/>
        <dbReference type="ChEBI" id="CHEBI:33019"/>
        <dbReference type="ChEBI" id="CHEBI:33384"/>
        <dbReference type="ChEBI" id="CHEBI:78442"/>
        <dbReference type="ChEBI" id="CHEBI:78533"/>
        <dbReference type="ChEBI" id="CHEBI:456215"/>
        <dbReference type="EC" id="6.1.1.11"/>
    </reaction>
</comment>
<comment type="catalytic activity">
    <reaction evidence="1">
        <text>tRNA(Sec) + L-serine + ATP = L-seryl-tRNA(Sec) + AMP + diphosphate + H(+)</text>
        <dbReference type="Rhea" id="RHEA:42580"/>
        <dbReference type="Rhea" id="RHEA-COMP:9742"/>
        <dbReference type="Rhea" id="RHEA-COMP:10128"/>
        <dbReference type="ChEBI" id="CHEBI:15378"/>
        <dbReference type="ChEBI" id="CHEBI:30616"/>
        <dbReference type="ChEBI" id="CHEBI:33019"/>
        <dbReference type="ChEBI" id="CHEBI:33384"/>
        <dbReference type="ChEBI" id="CHEBI:78442"/>
        <dbReference type="ChEBI" id="CHEBI:78533"/>
        <dbReference type="ChEBI" id="CHEBI:456215"/>
        <dbReference type="EC" id="6.1.1.11"/>
    </reaction>
</comment>
<comment type="pathway">
    <text evidence="1">Aminoacyl-tRNA biosynthesis; selenocysteinyl-tRNA(Sec) biosynthesis; L-seryl-tRNA(Sec) from L-serine and tRNA(Sec): step 1/1.</text>
</comment>
<comment type="subunit">
    <text evidence="1">Homodimer. The tRNA molecule binds across the dimer.</text>
</comment>
<comment type="subcellular location">
    <subcellularLocation>
        <location evidence="1">Cytoplasm</location>
    </subcellularLocation>
</comment>
<comment type="domain">
    <text evidence="1">Consists of two distinct domains, a catalytic core and a N-terminal extension that is involved in tRNA binding.</text>
</comment>
<comment type="similarity">
    <text evidence="1">Belongs to the class-II aminoacyl-tRNA synthetase family. Type-1 seryl-tRNA synthetase subfamily.</text>
</comment>
<dbReference type="EC" id="6.1.1.11" evidence="1"/>
<dbReference type="EMBL" id="CP000239">
    <property type="protein sequence ID" value="ABC98471.1"/>
    <property type="molecule type" value="Genomic_DNA"/>
</dbReference>
<dbReference type="RefSeq" id="WP_011429162.1">
    <property type="nucleotide sequence ID" value="NC_007775.1"/>
</dbReference>
<dbReference type="SMR" id="Q2JXL1"/>
<dbReference type="STRING" id="321327.CYA_0247"/>
<dbReference type="KEGG" id="cya:CYA_0247"/>
<dbReference type="eggNOG" id="COG0172">
    <property type="taxonomic scope" value="Bacteria"/>
</dbReference>
<dbReference type="HOGENOM" id="CLU_023797_1_1_3"/>
<dbReference type="OrthoDB" id="9804647at2"/>
<dbReference type="UniPathway" id="UPA00906">
    <property type="reaction ID" value="UER00895"/>
</dbReference>
<dbReference type="Proteomes" id="UP000008818">
    <property type="component" value="Chromosome"/>
</dbReference>
<dbReference type="GO" id="GO:0005737">
    <property type="term" value="C:cytoplasm"/>
    <property type="evidence" value="ECO:0007669"/>
    <property type="project" value="UniProtKB-SubCell"/>
</dbReference>
<dbReference type="GO" id="GO:0005524">
    <property type="term" value="F:ATP binding"/>
    <property type="evidence" value="ECO:0007669"/>
    <property type="project" value="UniProtKB-UniRule"/>
</dbReference>
<dbReference type="GO" id="GO:0004828">
    <property type="term" value="F:serine-tRNA ligase activity"/>
    <property type="evidence" value="ECO:0007669"/>
    <property type="project" value="UniProtKB-UniRule"/>
</dbReference>
<dbReference type="GO" id="GO:0016260">
    <property type="term" value="P:selenocysteine biosynthetic process"/>
    <property type="evidence" value="ECO:0007669"/>
    <property type="project" value="UniProtKB-UniRule"/>
</dbReference>
<dbReference type="GO" id="GO:0006434">
    <property type="term" value="P:seryl-tRNA aminoacylation"/>
    <property type="evidence" value="ECO:0007669"/>
    <property type="project" value="UniProtKB-UniRule"/>
</dbReference>
<dbReference type="CDD" id="cd00770">
    <property type="entry name" value="SerRS_core"/>
    <property type="match status" value="1"/>
</dbReference>
<dbReference type="Gene3D" id="3.30.930.10">
    <property type="entry name" value="Bira Bifunctional Protein, Domain 2"/>
    <property type="match status" value="1"/>
</dbReference>
<dbReference type="Gene3D" id="1.10.287.40">
    <property type="entry name" value="Serine-tRNA synthetase, tRNA binding domain"/>
    <property type="match status" value="1"/>
</dbReference>
<dbReference type="HAMAP" id="MF_00176">
    <property type="entry name" value="Ser_tRNA_synth_type1"/>
    <property type="match status" value="1"/>
</dbReference>
<dbReference type="InterPro" id="IPR002314">
    <property type="entry name" value="aa-tRNA-synt_IIb"/>
</dbReference>
<dbReference type="InterPro" id="IPR006195">
    <property type="entry name" value="aa-tRNA-synth_II"/>
</dbReference>
<dbReference type="InterPro" id="IPR045864">
    <property type="entry name" value="aa-tRNA-synth_II/BPL/LPL"/>
</dbReference>
<dbReference type="InterPro" id="IPR002317">
    <property type="entry name" value="Ser-tRNA-ligase_type_1"/>
</dbReference>
<dbReference type="InterPro" id="IPR015866">
    <property type="entry name" value="Ser-tRNA-synth_1_N"/>
</dbReference>
<dbReference type="InterPro" id="IPR042103">
    <property type="entry name" value="SerRS_1_N_sf"/>
</dbReference>
<dbReference type="InterPro" id="IPR033729">
    <property type="entry name" value="SerRS_core"/>
</dbReference>
<dbReference type="InterPro" id="IPR010978">
    <property type="entry name" value="tRNA-bd_arm"/>
</dbReference>
<dbReference type="NCBIfam" id="TIGR00414">
    <property type="entry name" value="serS"/>
    <property type="match status" value="1"/>
</dbReference>
<dbReference type="PANTHER" id="PTHR43697:SF1">
    <property type="entry name" value="SERINE--TRNA LIGASE"/>
    <property type="match status" value="1"/>
</dbReference>
<dbReference type="PANTHER" id="PTHR43697">
    <property type="entry name" value="SERYL-TRNA SYNTHETASE"/>
    <property type="match status" value="1"/>
</dbReference>
<dbReference type="Pfam" id="PF02403">
    <property type="entry name" value="Seryl_tRNA_N"/>
    <property type="match status" value="1"/>
</dbReference>
<dbReference type="Pfam" id="PF00587">
    <property type="entry name" value="tRNA-synt_2b"/>
    <property type="match status" value="1"/>
</dbReference>
<dbReference type="PIRSF" id="PIRSF001529">
    <property type="entry name" value="Ser-tRNA-synth_IIa"/>
    <property type="match status" value="1"/>
</dbReference>
<dbReference type="PRINTS" id="PR00981">
    <property type="entry name" value="TRNASYNTHSER"/>
</dbReference>
<dbReference type="SUPFAM" id="SSF55681">
    <property type="entry name" value="Class II aaRS and biotin synthetases"/>
    <property type="match status" value="1"/>
</dbReference>
<dbReference type="SUPFAM" id="SSF46589">
    <property type="entry name" value="tRNA-binding arm"/>
    <property type="match status" value="1"/>
</dbReference>
<dbReference type="PROSITE" id="PS50862">
    <property type="entry name" value="AA_TRNA_LIGASE_II"/>
    <property type="match status" value="1"/>
</dbReference>
<proteinExistence type="inferred from homology"/>